<sequence>MGLEALVPLAMIVAIFLLLVDLMHRHQRWAARYPPGPLPLPGLGNLLHVDFQNTPYCFDQLRRRFGDVFSLQLAWTPVVVLNGLAAVREAMVTRGEDTADRPPAPIYQVLGFGPRSQGVILSRYGPAWREQRRFSVSTLRNLGLGKKSLEQWVTEEAACLCAAFADQAGRPFRPNGLLDKAVSNVIASLTCGRRFEYDDPRFLRLLDLAQEGLKEESGFLREVLNAVPVLPHIPALAGKVLRFQKAFLTQLDELLTEHRMTWDPAQPPRDLTEAFLAKKEKAKGSPESSFNDENLRIVVGNLFLAGMVTTSTTLAWGLLLMILHLDVQRGRRVSPGCPIVGTHVCPVRVQQEIDDVIGQVRRPEMGDQAHMPCTTAVIHEVQHFGDIVPLGVTHMTSRDIEVQGFRIPKGTTLITNLSSVLKDEAVWKKPFRFHPEHFLDAQGHFVKPEAFLPFSAGRRACLGEPLARMELFLFFTSLLQHFSFSVAAGQPRPSHSRVVSFLVTPSPYELCAVPR</sequence>
<proteinExistence type="evidence at protein level"/>
<accession>A0A087X1C5</accession>
<accession>Q6XP50</accession>
<comment type="function">
    <text evidence="4 7">May be responsible for the metabolism of many drugs and environmental chemicals that it oxidizes. It may be involved in the metabolism of codeine to morphine (PubMed:15051713). However, another study could not confirm it (PubMed:18838503).</text>
</comment>
<comment type="catalytic activity">
    <reaction evidence="4">
        <text>an organic molecule + reduced [NADPH--hemoprotein reductase] + O2 = an alcohol + oxidized [NADPH--hemoprotein reductase] + H2O + H(+)</text>
        <dbReference type="Rhea" id="RHEA:17149"/>
        <dbReference type="Rhea" id="RHEA-COMP:11964"/>
        <dbReference type="Rhea" id="RHEA-COMP:11965"/>
        <dbReference type="ChEBI" id="CHEBI:15377"/>
        <dbReference type="ChEBI" id="CHEBI:15378"/>
        <dbReference type="ChEBI" id="CHEBI:15379"/>
        <dbReference type="ChEBI" id="CHEBI:30879"/>
        <dbReference type="ChEBI" id="CHEBI:57618"/>
        <dbReference type="ChEBI" id="CHEBI:58210"/>
        <dbReference type="ChEBI" id="CHEBI:142491"/>
        <dbReference type="EC" id="1.14.14.1"/>
    </reaction>
</comment>
<comment type="cofactor">
    <cofactor>
        <name>heme</name>
        <dbReference type="ChEBI" id="CHEBI:30413"/>
    </cofactor>
</comment>
<comment type="subcellular location">
    <subcellularLocation>
        <location evidence="8">Membrane</location>
        <topology evidence="2">Multi-pass membrane protein</topology>
    </subcellularLocation>
    <subcellularLocation>
        <location evidence="9">Cytoplasm</location>
    </subcellularLocation>
    <subcellularLocation>
        <location evidence="7">Mitochondrion</location>
    </subcellularLocation>
</comment>
<comment type="tissue specificity">
    <text evidence="4">Expressed in brain cortex (at protein level).</text>
</comment>
<comment type="polymorphism">
    <text evidence="4 5 6">One study shows that a rare double polymorphism allows the expression of a functional protein (PubMed:15051713). Two subsequent studies could not confirm the combined existence of both polymorphisms in the genomes examined in those studies (PubMed:16169517, PubMed:17494644).</text>
</comment>
<comment type="similarity">
    <text evidence="3">Belongs to the cytochrome P450 family.</text>
</comment>
<comment type="caution">
    <text evidence="8">Pseudogene in the majority of genomes but is protein-coding in others. The functional allele is thought to be rare.</text>
</comment>
<gene>
    <name evidence="10" type="primary">CYP2D7</name>
</gene>
<protein>
    <recommendedName>
        <fullName evidence="8">Cytochrome P450 2D7</fullName>
        <ecNumber evidence="4">1.14.14.1</ecNumber>
    </recommendedName>
</protein>
<feature type="chain" id="PRO_0000432413" description="Cytochrome P450 2D7">
    <location>
        <begin position="1"/>
        <end position="515"/>
    </location>
</feature>
<feature type="topological domain" description="Extracellular" evidence="8">
    <location>
        <begin position="1"/>
        <end position="2"/>
    </location>
</feature>
<feature type="transmembrane region" description="Helical; Name=1" evidence="2">
    <location>
        <begin position="3"/>
        <end position="23"/>
    </location>
</feature>
<feature type="topological domain" description="Cytoplasmic" evidence="8">
    <location>
        <begin position="24"/>
        <end position="301"/>
    </location>
</feature>
<feature type="transmembrane region" description="Helical; Name=2" evidence="2">
    <location>
        <begin position="302"/>
        <end position="322"/>
    </location>
</feature>
<feature type="topological domain" description="Extracellular" evidence="8">
    <location>
        <begin position="323"/>
        <end position="515"/>
    </location>
</feature>
<feature type="binding site" description="axial binding residue" evidence="1">
    <location>
        <position position="461"/>
    </location>
    <ligand>
        <name>heme</name>
        <dbReference type="ChEBI" id="CHEBI:30413"/>
    </ligand>
    <ligandPart>
        <name>Fe</name>
        <dbReference type="ChEBI" id="CHEBI:18248"/>
    </ligandPart>
</feature>
<feature type="glycosylation site" description="N-linked (GlcNAc...) asparagine" evidence="2">
    <location>
        <position position="416"/>
    </location>
</feature>
<feature type="sequence variant" id="VAR_072632" description="In dbSNP:rs11090077." evidence="4">
    <original>S</original>
    <variation>N</variation>
    <location>
        <position position="70"/>
    </location>
</feature>
<feature type="sequence variant" id="VAR_072633" description="In dbSNP:rs1800754." evidence="4">
    <original>S</original>
    <variation>L</variation>
    <location>
        <position position="311"/>
    </location>
</feature>
<feature type="sequence variant" id="VAR_072634" evidence="4">
    <original>C</original>
    <variation>CS</variation>
    <location>
        <position position="337"/>
    </location>
</feature>
<feature type="sequence variant" id="VAR_072635" evidence="4">
    <original>AHMPC</original>
    <variation>VHMPY</variation>
    <location>
        <begin position="369"/>
        <end position="373"/>
    </location>
</feature>
<feature type="sequence variant" id="VAR_072636" description="In dbSNP:rs56127449." evidence="4">
    <original>H</original>
    <variation>R</variation>
    <location>
        <position position="383"/>
    </location>
</feature>
<feature type="sequence variant" id="VAR_072637" description="In dbSNP:rs2070907." evidence="4">
    <original>K</original>
    <variation>E</variation>
    <location>
        <position position="428"/>
    </location>
</feature>
<organism>
    <name type="scientific">Homo sapiens</name>
    <name type="common">Human</name>
    <dbReference type="NCBI Taxonomy" id="9606"/>
    <lineage>
        <taxon>Eukaryota</taxon>
        <taxon>Metazoa</taxon>
        <taxon>Chordata</taxon>
        <taxon>Craniata</taxon>
        <taxon>Vertebrata</taxon>
        <taxon>Euteleostomi</taxon>
        <taxon>Mammalia</taxon>
        <taxon>Eutheria</taxon>
        <taxon>Euarchontoglires</taxon>
        <taxon>Primates</taxon>
        <taxon>Haplorrhini</taxon>
        <taxon>Catarrhini</taxon>
        <taxon>Hominidae</taxon>
        <taxon>Homo</taxon>
    </lineage>
</organism>
<dbReference type="EC" id="1.14.14.1" evidence="4"/>
<dbReference type="EMBL" id="AY220845">
    <property type="protein sequence ID" value="AAO49806.1"/>
    <property type="molecule type" value="mRNA"/>
</dbReference>
<dbReference type="EMBL" id="AC254562">
    <property type="status" value="NOT_ANNOTATED_CDS"/>
    <property type="molecule type" value="Genomic_DNA"/>
</dbReference>
<dbReference type="RefSeq" id="NP_001335315.1">
    <property type="nucleotide sequence ID" value="NM_001348386.1"/>
</dbReference>
<dbReference type="SMR" id="A0A087X1C5"/>
<dbReference type="FunCoup" id="A0A087X1C5">
    <property type="interactions" value="257"/>
</dbReference>
<dbReference type="ChEMBL" id="CHEMBL3542437"/>
<dbReference type="GlyCosmos" id="A0A087X1C5">
    <property type="glycosylation" value="1 site, No reported glycans"/>
</dbReference>
<dbReference type="GlyGen" id="A0A087X1C5">
    <property type="glycosylation" value="1 site"/>
</dbReference>
<dbReference type="BioMuta" id="CYP2D7"/>
<dbReference type="jPOST" id="A0A087X1C5"/>
<dbReference type="MassIVE" id="A0A087X1C5"/>
<dbReference type="PeptideAtlas" id="A0A087X1C5"/>
<dbReference type="DNASU" id="1564"/>
<dbReference type="GeneID" id="1564"/>
<dbReference type="KEGG" id="hsa:1564"/>
<dbReference type="UCSC" id="uc062eux.1">
    <property type="organism name" value="human"/>
</dbReference>
<dbReference type="AGR" id="HGNC:2624"/>
<dbReference type="CTD" id="1564"/>
<dbReference type="DisGeNET" id="1564"/>
<dbReference type="GeneCards" id="CYP2D7"/>
<dbReference type="HGNC" id="HGNC:2624">
    <property type="gene designation" value="CYP2D7"/>
</dbReference>
<dbReference type="neXtProt" id="NX_A0A087X1C5"/>
<dbReference type="VEuPathDB" id="HostDB:ENSG00000205702"/>
<dbReference type="HOGENOM" id="CLU_001570_22_0_1"/>
<dbReference type="InParanoid" id="A0A087X1C5"/>
<dbReference type="OMA" id="EHDIAFA"/>
<dbReference type="OrthoDB" id="3934656at2759"/>
<dbReference type="PAN-GO" id="A0A087X1C5">
    <property type="GO annotations" value="7 GO annotations based on evolutionary models"/>
</dbReference>
<dbReference type="PathwayCommons" id="A0A087X1C5"/>
<dbReference type="BioGRID-ORCS" id="1564">
    <property type="hits" value="0 hits in 40 CRISPR screens"/>
</dbReference>
<dbReference type="GenomeRNAi" id="1564"/>
<dbReference type="Pharos" id="A0A087X1C5">
    <property type="development level" value="Tbio"/>
</dbReference>
<dbReference type="Proteomes" id="UP000005640">
    <property type="component" value="Chromosome 22"/>
</dbReference>
<dbReference type="RNAct" id="A0A087X1C5">
    <property type="molecule type" value="protein"/>
</dbReference>
<dbReference type="Bgee" id="ENSG00000205702">
    <property type="expression patterns" value="Expressed in right lobe of liver and 91 other cell types or tissues"/>
</dbReference>
<dbReference type="ExpressionAtlas" id="A0A087X1C5">
    <property type="expression patterns" value="baseline and differential"/>
</dbReference>
<dbReference type="GO" id="GO:0005737">
    <property type="term" value="C:cytoplasm"/>
    <property type="evidence" value="ECO:0000314"/>
    <property type="project" value="UniProtKB"/>
</dbReference>
<dbReference type="GO" id="GO:0043231">
    <property type="term" value="C:intracellular membrane-bounded organelle"/>
    <property type="evidence" value="ECO:0000318"/>
    <property type="project" value="GO_Central"/>
</dbReference>
<dbReference type="GO" id="GO:0016020">
    <property type="term" value="C:membrane"/>
    <property type="evidence" value="ECO:0007669"/>
    <property type="project" value="UniProtKB-SubCell"/>
</dbReference>
<dbReference type="GO" id="GO:0005739">
    <property type="term" value="C:mitochondrion"/>
    <property type="evidence" value="ECO:0000314"/>
    <property type="project" value="UniProtKB"/>
</dbReference>
<dbReference type="GO" id="GO:0070330">
    <property type="term" value="F:aromatase activity"/>
    <property type="evidence" value="ECO:0000314"/>
    <property type="project" value="UniProtKB"/>
</dbReference>
<dbReference type="GO" id="GO:0020037">
    <property type="term" value="F:heme binding"/>
    <property type="evidence" value="ECO:0000318"/>
    <property type="project" value="GO_Central"/>
</dbReference>
<dbReference type="GO" id="GO:0005506">
    <property type="term" value="F:iron ion binding"/>
    <property type="evidence" value="ECO:0007669"/>
    <property type="project" value="InterPro"/>
</dbReference>
<dbReference type="GO" id="GO:0016712">
    <property type="term" value="F:oxidoreductase activity, acting on paired donors, with incorporation or reduction of molecular oxygen, reduced flavin or flavoprotein as one donor, and incorporation of one atom of oxygen"/>
    <property type="evidence" value="ECO:0000318"/>
    <property type="project" value="GO_Central"/>
</dbReference>
<dbReference type="GO" id="GO:0019369">
    <property type="term" value="P:arachidonate metabolic process"/>
    <property type="evidence" value="ECO:0000318"/>
    <property type="project" value="GO_Central"/>
</dbReference>
<dbReference type="GO" id="GO:0042178">
    <property type="term" value="P:xenobiotic catabolic process"/>
    <property type="evidence" value="ECO:0000314"/>
    <property type="project" value="UniProtKB"/>
</dbReference>
<dbReference type="GO" id="GO:0006805">
    <property type="term" value="P:xenobiotic metabolic process"/>
    <property type="evidence" value="ECO:0000314"/>
    <property type="project" value="UniProtKB"/>
</dbReference>
<dbReference type="CDD" id="cd20663">
    <property type="entry name" value="CYP2D"/>
    <property type="match status" value="1"/>
</dbReference>
<dbReference type="FunFam" id="1.10.630.10:FF:000004">
    <property type="entry name" value="cytochrome P450 2D15 isoform X1"/>
    <property type="match status" value="1"/>
</dbReference>
<dbReference type="Gene3D" id="1.10.630.10">
    <property type="entry name" value="Cytochrome P450"/>
    <property type="match status" value="1"/>
</dbReference>
<dbReference type="InterPro" id="IPR001128">
    <property type="entry name" value="Cyt_P450"/>
</dbReference>
<dbReference type="InterPro" id="IPR017972">
    <property type="entry name" value="Cyt_P450_CS"/>
</dbReference>
<dbReference type="InterPro" id="IPR002401">
    <property type="entry name" value="Cyt_P450_E_grp-I"/>
</dbReference>
<dbReference type="InterPro" id="IPR008069">
    <property type="entry name" value="Cyt_P450_E_grp-I_CYP2D-like"/>
</dbReference>
<dbReference type="InterPro" id="IPR036396">
    <property type="entry name" value="Cyt_P450_sf"/>
</dbReference>
<dbReference type="InterPro" id="IPR050182">
    <property type="entry name" value="Cytochrome_P450_fam2"/>
</dbReference>
<dbReference type="PANTHER" id="PTHR24300:SF1">
    <property type="entry name" value="CYTOCHROME P450 2D6-RELATED"/>
    <property type="match status" value="1"/>
</dbReference>
<dbReference type="PANTHER" id="PTHR24300">
    <property type="entry name" value="CYTOCHROME P450 508A4-RELATED"/>
    <property type="match status" value="1"/>
</dbReference>
<dbReference type="Pfam" id="PF00067">
    <property type="entry name" value="p450"/>
    <property type="match status" value="2"/>
</dbReference>
<dbReference type="PRINTS" id="PR00463">
    <property type="entry name" value="EP450I"/>
</dbReference>
<dbReference type="PRINTS" id="PR01686">
    <property type="entry name" value="EP450ICYP2D"/>
</dbReference>
<dbReference type="PRINTS" id="PR00385">
    <property type="entry name" value="P450"/>
</dbReference>
<dbReference type="SUPFAM" id="SSF48264">
    <property type="entry name" value="Cytochrome P450"/>
    <property type="match status" value="1"/>
</dbReference>
<dbReference type="PROSITE" id="PS00086">
    <property type="entry name" value="CYTOCHROME_P450"/>
    <property type="match status" value="1"/>
</dbReference>
<name>CP2D7_HUMAN</name>
<reference key="1">
    <citation type="journal article" date="2004" name="J. Biol. Chem.">
        <title>A frameshift mutation and alternate splicing in human brain generate a functional form of the pseudogene cytochrome P4502D7 that demethylates codeine to morphine.</title>
        <authorList>
            <person name="Pai H.V."/>
            <person name="Kommaddi R.P."/>
            <person name="Chinta S.J."/>
            <person name="Mori T."/>
            <person name="Boyd M.R."/>
            <person name="Ravindranath V."/>
        </authorList>
    </citation>
    <scope>NUCLEOTIDE SEQUENCE [MRNA]</scope>
    <scope>VARIANTS ASN-70; LEU-311; SER-337 INS; 369-ALA--CYS-373 DELINS VAL-HIS-MET-PRO-TYR; ARG-383 AND GLU-428</scope>
    <scope>FUNCTION</scope>
    <scope>CATALYTIC ACTIVITY</scope>
    <scope>SUBCELLULAR LOCATION</scope>
    <scope>TISSUE SPECIFICITY</scope>
    <source>
        <tissue>Brain cortex</tissue>
    </source>
</reference>
<reference key="2">
    <citation type="journal article" date="1999" name="Nature">
        <title>The DNA sequence of human chromosome 22.</title>
        <authorList>
            <person name="Dunham I."/>
            <person name="Hunt A.R."/>
            <person name="Collins J.E."/>
            <person name="Bruskiewich R."/>
            <person name="Beare D.M."/>
            <person name="Clamp M."/>
            <person name="Smink L.J."/>
            <person name="Ainscough R."/>
            <person name="Almeida J.P."/>
            <person name="Babbage A.K."/>
            <person name="Bagguley C."/>
            <person name="Bailey J."/>
            <person name="Barlow K.F."/>
            <person name="Bates K.N."/>
            <person name="Beasley O.P."/>
            <person name="Bird C.P."/>
            <person name="Blakey S.E."/>
            <person name="Bridgeman A.M."/>
            <person name="Buck D."/>
            <person name="Burgess J."/>
            <person name="Burrill W.D."/>
            <person name="Burton J."/>
            <person name="Carder C."/>
            <person name="Carter N.P."/>
            <person name="Chen Y."/>
            <person name="Clark G."/>
            <person name="Clegg S.M."/>
            <person name="Cobley V.E."/>
            <person name="Cole C.G."/>
            <person name="Collier R.E."/>
            <person name="Connor R."/>
            <person name="Conroy D."/>
            <person name="Corby N.R."/>
            <person name="Coville G.J."/>
            <person name="Cox A.V."/>
            <person name="Davis J."/>
            <person name="Dawson E."/>
            <person name="Dhami P.D."/>
            <person name="Dockree C."/>
            <person name="Dodsworth S.J."/>
            <person name="Durbin R.M."/>
            <person name="Ellington A.G."/>
            <person name="Evans K.L."/>
            <person name="Fey J.M."/>
            <person name="Fleming K."/>
            <person name="French L."/>
            <person name="Garner A.A."/>
            <person name="Gilbert J.G.R."/>
            <person name="Goward M.E."/>
            <person name="Grafham D.V."/>
            <person name="Griffiths M.N.D."/>
            <person name="Hall C."/>
            <person name="Hall R.E."/>
            <person name="Hall-Tamlyn G."/>
            <person name="Heathcott R.W."/>
            <person name="Ho S."/>
            <person name="Holmes S."/>
            <person name="Hunt S.E."/>
            <person name="Jones M.C."/>
            <person name="Kershaw J."/>
            <person name="Kimberley A.M."/>
            <person name="King A."/>
            <person name="Laird G.K."/>
            <person name="Langford C.F."/>
            <person name="Leversha M.A."/>
            <person name="Lloyd C."/>
            <person name="Lloyd D.M."/>
            <person name="Martyn I.D."/>
            <person name="Mashreghi-Mohammadi M."/>
            <person name="Matthews L.H."/>
            <person name="Mccann O.T."/>
            <person name="Mcclay J."/>
            <person name="Mclaren S."/>
            <person name="McMurray A.A."/>
            <person name="Milne S.A."/>
            <person name="Mortimore B.J."/>
            <person name="Odell C.N."/>
            <person name="Pavitt R."/>
            <person name="Pearce A.V."/>
            <person name="Pearson D."/>
            <person name="Phillimore B.J.C.T."/>
            <person name="Phillips S.H."/>
            <person name="Plumb R.W."/>
            <person name="Ramsay H."/>
            <person name="Ramsey Y."/>
            <person name="Rogers L."/>
            <person name="Ross M.T."/>
            <person name="Scott C.E."/>
            <person name="Sehra H.K."/>
            <person name="Skuce C.D."/>
            <person name="Smalley S."/>
            <person name="Smith M.L."/>
            <person name="Soderlund C."/>
            <person name="Spragon L."/>
            <person name="Steward C.A."/>
            <person name="Sulston J.E."/>
            <person name="Swann R.M."/>
            <person name="Vaudin M."/>
            <person name="Wall M."/>
            <person name="Wallis J.M."/>
            <person name="Whiteley M.N."/>
            <person name="Willey D.L."/>
            <person name="Williams L."/>
            <person name="Williams S.A."/>
            <person name="Williamson H."/>
            <person name="Wilmer T.E."/>
            <person name="Wilming L."/>
            <person name="Wright C.L."/>
            <person name="Hubbard T."/>
            <person name="Bentley D.R."/>
            <person name="Beck S."/>
            <person name="Rogers J."/>
            <person name="Shimizu N."/>
            <person name="Minoshima S."/>
            <person name="Kawasaki K."/>
            <person name="Sasaki T."/>
            <person name="Asakawa S."/>
            <person name="Kudoh J."/>
            <person name="Shintani A."/>
            <person name="Shibuya K."/>
            <person name="Yoshizaki Y."/>
            <person name="Aoki N."/>
            <person name="Mitsuyama S."/>
            <person name="Roe B.A."/>
            <person name="Chen F."/>
            <person name="Chu L."/>
            <person name="Crabtree J."/>
            <person name="Deschamps S."/>
            <person name="Do A."/>
            <person name="Do T."/>
            <person name="Dorman A."/>
            <person name="Fang F."/>
            <person name="Fu Y."/>
            <person name="Hu P."/>
            <person name="Hua A."/>
            <person name="Kenton S."/>
            <person name="Lai H."/>
            <person name="Lao H.I."/>
            <person name="Lewis J."/>
            <person name="Lewis S."/>
            <person name="Lin S.-P."/>
            <person name="Loh P."/>
            <person name="Malaj E."/>
            <person name="Nguyen T."/>
            <person name="Pan H."/>
            <person name="Phan S."/>
            <person name="Qi S."/>
            <person name="Qian Y."/>
            <person name="Ray L."/>
            <person name="Ren Q."/>
            <person name="Shaull S."/>
            <person name="Sloan D."/>
            <person name="Song L."/>
            <person name="Wang Q."/>
            <person name="Wang Y."/>
            <person name="Wang Z."/>
            <person name="White J."/>
            <person name="Willingham D."/>
            <person name="Wu H."/>
            <person name="Yao Z."/>
            <person name="Zhan M."/>
            <person name="Zhang G."/>
            <person name="Chissoe S."/>
            <person name="Murray J."/>
            <person name="Miller N."/>
            <person name="Minx P."/>
            <person name="Fulton R."/>
            <person name="Johnson D."/>
            <person name="Bemis G."/>
            <person name="Bentley D."/>
            <person name="Bradshaw H."/>
            <person name="Bourne S."/>
            <person name="Cordes M."/>
            <person name="Du Z."/>
            <person name="Fulton L."/>
            <person name="Goela D."/>
            <person name="Graves T."/>
            <person name="Hawkins J."/>
            <person name="Hinds K."/>
            <person name="Kemp K."/>
            <person name="Latreille P."/>
            <person name="Layman D."/>
            <person name="Ozersky P."/>
            <person name="Rohlfing T."/>
            <person name="Scheet P."/>
            <person name="Walker C."/>
            <person name="Wamsley A."/>
            <person name="Wohldmann P."/>
            <person name="Pepin K."/>
            <person name="Nelson J."/>
            <person name="Korf I."/>
            <person name="Bedell J.A."/>
            <person name="Hillier L.W."/>
            <person name="Mardis E."/>
            <person name="Waterston R."/>
            <person name="Wilson R."/>
            <person name="Emanuel B.S."/>
            <person name="Shaikh T."/>
            <person name="Kurahashi H."/>
            <person name="Saitta S."/>
            <person name="Budarf M.L."/>
            <person name="McDermid H.E."/>
            <person name="Johnson A."/>
            <person name="Wong A.C.C."/>
            <person name="Morrow B.E."/>
            <person name="Edelmann L."/>
            <person name="Kim U.J."/>
            <person name="Shizuya H."/>
            <person name="Simon M.I."/>
            <person name="Dumanski J.P."/>
            <person name="Peyrard M."/>
            <person name="Kedra D."/>
            <person name="Seroussi E."/>
            <person name="Fransson I."/>
            <person name="Tapia I."/>
            <person name="Bruder C.E."/>
            <person name="O'Brien K.P."/>
            <person name="Wilkinson P."/>
            <person name="Bodenteich A."/>
            <person name="Hartman K."/>
            <person name="Hu X."/>
            <person name="Khan A.S."/>
            <person name="Lane L."/>
            <person name="Tilahun Y."/>
            <person name="Wright H."/>
        </authorList>
    </citation>
    <scope>NUCLEOTIDE SEQUENCE [LARGE SCALE GENOMIC DNA]</scope>
</reference>
<reference key="3">
    <citation type="journal article" date="2005" name="Biochem. Biophys. Res. Commun.">
        <title>CYP2D7 splice variants in human liver and brain: does CYP2D7 encode functional protein?</title>
        <authorList>
            <person name="Gaedigk A."/>
            <person name="Gaedigk R."/>
            <person name="Leeder J.S."/>
        </authorList>
    </citation>
    <scope>POLYMORPHISM</scope>
</reference>
<reference key="4">
    <citation type="journal article" date="2007" name="Drug Metab. Dispos.">
        <title>Frequency of the frame-shifting CYP2D7 138delT polymorphism in a large, ethnically diverse sample population.</title>
        <authorList>
            <person name="Bhathena A."/>
            <person name="Mueller T."/>
            <person name="Grimm D.R."/>
            <person name="Idler K."/>
            <person name="Tsurutani A."/>
            <person name="Spear B.B."/>
            <person name="Katz D.A."/>
        </authorList>
    </citation>
    <scope>POLYMORPHISM</scope>
</reference>
<reference key="5">
    <citation type="journal article" date="2009" name="Drug Metab. Dispos.">
        <title>Expression and functional analysis of CYP2D6.24, CYP2D6.26, CYP2D6.27, and CYP2D7 isozymes.</title>
        <authorList>
            <person name="Zhang W.Y."/>
            <person name="Tu Y.B."/>
            <person name="Haining R.L."/>
            <person name="Yu A.M."/>
        </authorList>
    </citation>
    <scope>FUNCTION</scope>
    <scope>SUBCELLULAR LOCATION</scope>
</reference>
<evidence type="ECO:0000250" key="1">
    <source>
        <dbReference type="UniProtKB" id="P10635"/>
    </source>
</evidence>
<evidence type="ECO:0000255" key="2"/>
<evidence type="ECO:0000255" key="3">
    <source>
        <dbReference type="RuleBase" id="RU000461"/>
    </source>
</evidence>
<evidence type="ECO:0000269" key="4">
    <source>
    </source>
</evidence>
<evidence type="ECO:0000269" key="5">
    <source>
    </source>
</evidence>
<evidence type="ECO:0000269" key="6">
    <source>
    </source>
</evidence>
<evidence type="ECO:0000269" key="7">
    <source>
    </source>
</evidence>
<evidence type="ECO:0000305" key="8"/>
<evidence type="ECO:0000305" key="9">
    <source>
    </source>
</evidence>
<evidence type="ECO:0000312" key="10">
    <source>
        <dbReference type="HGNC" id="HGNC:2624"/>
    </source>
</evidence>
<keyword id="KW-0963">Cytoplasm</keyword>
<keyword id="KW-0325">Glycoprotein</keyword>
<keyword id="KW-0349">Heme</keyword>
<keyword id="KW-0408">Iron</keyword>
<keyword id="KW-0472">Membrane</keyword>
<keyword id="KW-0479">Metal-binding</keyword>
<keyword id="KW-0496">Mitochondrion</keyword>
<keyword id="KW-0503">Monooxygenase</keyword>
<keyword id="KW-0560">Oxidoreductase</keyword>
<keyword id="KW-1185">Reference proteome</keyword>
<keyword id="KW-0812">Transmembrane</keyword>
<keyword id="KW-1133">Transmembrane helix</keyword>